<accession>B0KK78</accession>
<reference key="1">
    <citation type="submission" date="2008-01" db="EMBL/GenBank/DDBJ databases">
        <title>Complete sequence of Pseudomonas putida GB-1.</title>
        <authorList>
            <consortium name="US DOE Joint Genome Institute"/>
            <person name="Copeland A."/>
            <person name="Lucas S."/>
            <person name="Lapidus A."/>
            <person name="Barry K."/>
            <person name="Glavina del Rio T."/>
            <person name="Dalin E."/>
            <person name="Tice H."/>
            <person name="Pitluck S."/>
            <person name="Bruce D."/>
            <person name="Goodwin L."/>
            <person name="Chertkov O."/>
            <person name="Brettin T."/>
            <person name="Detter J.C."/>
            <person name="Han C."/>
            <person name="Kuske C.R."/>
            <person name="Schmutz J."/>
            <person name="Larimer F."/>
            <person name="Land M."/>
            <person name="Hauser L."/>
            <person name="Kyrpides N."/>
            <person name="Kim E."/>
            <person name="McCarthy J.K."/>
            <person name="Richardson P."/>
        </authorList>
    </citation>
    <scope>NUCLEOTIDE SEQUENCE [LARGE SCALE GENOMIC DNA]</scope>
    <source>
        <strain>GB-1</strain>
    </source>
</reference>
<organism>
    <name type="scientific">Pseudomonas putida (strain GB-1)</name>
    <dbReference type="NCBI Taxonomy" id="76869"/>
    <lineage>
        <taxon>Bacteria</taxon>
        <taxon>Pseudomonadati</taxon>
        <taxon>Pseudomonadota</taxon>
        <taxon>Gammaproteobacteria</taxon>
        <taxon>Pseudomonadales</taxon>
        <taxon>Pseudomonadaceae</taxon>
        <taxon>Pseudomonas</taxon>
    </lineage>
</organism>
<evidence type="ECO:0000255" key="1">
    <source>
        <dbReference type="HAMAP-Rule" id="MF_01326"/>
    </source>
</evidence>
<evidence type="ECO:0000305" key="2"/>
<keyword id="KW-0687">Ribonucleoprotein</keyword>
<keyword id="KW-0689">Ribosomal protein</keyword>
<keyword id="KW-0694">RNA-binding</keyword>
<keyword id="KW-0699">rRNA-binding</keyword>
<sequence>MQKIRRDDEIIVIAGKDKGKRGKVLKVLADDRLVIGGVNLVKRHTKPNPMAGVQGGIVEKEAPLHASNVAIFNGETNKADRVGFKVEDGKKIRVFKSTQKAVDA</sequence>
<dbReference type="EMBL" id="CP000926">
    <property type="protein sequence ID" value="ABY96406.1"/>
    <property type="molecule type" value="Genomic_DNA"/>
</dbReference>
<dbReference type="RefSeq" id="WP_003255476.1">
    <property type="nucleotide sequence ID" value="NC_010322.1"/>
</dbReference>
<dbReference type="SMR" id="B0KK78"/>
<dbReference type="GeneID" id="93443971"/>
<dbReference type="KEGG" id="ppg:PputGB1_0495"/>
<dbReference type="eggNOG" id="COG0198">
    <property type="taxonomic scope" value="Bacteria"/>
</dbReference>
<dbReference type="HOGENOM" id="CLU_093315_2_2_6"/>
<dbReference type="Proteomes" id="UP000002157">
    <property type="component" value="Chromosome"/>
</dbReference>
<dbReference type="GO" id="GO:1990904">
    <property type="term" value="C:ribonucleoprotein complex"/>
    <property type="evidence" value="ECO:0007669"/>
    <property type="project" value="UniProtKB-KW"/>
</dbReference>
<dbReference type="GO" id="GO:0005840">
    <property type="term" value="C:ribosome"/>
    <property type="evidence" value="ECO:0007669"/>
    <property type="project" value="UniProtKB-KW"/>
</dbReference>
<dbReference type="GO" id="GO:0019843">
    <property type="term" value="F:rRNA binding"/>
    <property type="evidence" value="ECO:0007669"/>
    <property type="project" value="UniProtKB-UniRule"/>
</dbReference>
<dbReference type="GO" id="GO:0003735">
    <property type="term" value="F:structural constituent of ribosome"/>
    <property type="evidence" value="ECO:0007669"/>
    <property type="project" value="InterPro"/>
</dbReference>
<dbReference type="GO" id="GO:0006412">
    <property type="term" value="P:translation"/>
    <property type="evidence" value="ECO:0007669"/>
    <property type="project" value="UniProtKB-UniRule"/>
</dbReference>
<dbReference type="CDD" id="cd06089">
    <property type="entry name" value="KOW_RPL26"/>
    <property type="match status" value="1"/>
</dbReference>
<dbReference type="FunFam" id="2.30.30.30:FF:000004">
    <property type="entry name" value="50S ribosomal protein L24"/>
    <property type="match status" value="1"/>
</dbReference>
<dbReference type="Gene3D" id="2.30.30.30">
    <property type="match status" value="1"/>
</dbReference>
<dbReference type="HAMAP" id="MF_01326_B">
    <property type="entry name" value="Ribosomal_uL24_B"/>
    <property type="match status" value="1"/>
</dbReference>
<dbReference type="InterPro" id="IPR005824">
    <property type="entry name" value="KOW"/>
</dbReference>
<dbReference type="InterPro" id="IPR014722">
    <property type="entry name" value="Rib_uL2_dom2"/>
</dbReference>
<dbReference type="InterPro" id="IPR003256">
    <property type="entry name" value="Ribosomal_uL24"/>
</dbReference>
<dbReference type="InterPro" id="IPR005825">
    <property type="entry name" value="Ribosomal_uL24_CS"/>
</dbReference>
<dbReference type="InterPro" id="IPR041988">
    <property type="entry name" value="Ribosomal_uL24_KOW"/>
</dbReference>
<dbReference type="InterPro" id="IPR008991">
    <property type="entry name" value="Translation_prot_SH3-like_sf"/>
</dbReference>
<dbReference type="NCBIfam" id="TIGR01079">
    <property type="entry name" value="rplX_bact"/>
    <property type="match status" value="1"/>
</dbReference>
<dbReference type="PANTHER" id="PTHR12903">
    <property type="entry name" value="MITOCHONDRIAL RIBOSOMAL PROTEIN L24"/>
    <property type="match status" value="1"/>
</dbReference>
<dbReference type="Pfam" id="PF00467">
    <property type="entry name" value="KOW"/>
    <property type="match status" value="1"/>
</dbReference>
<dbReference type="Pfam" id="PF17136">
    <property type="entry name" value="ribosomal_L24"/>
    <property type="match status" value="1"/>
</dbReference>
<dbReference type="SMART" id="SM00739">
    <property type="entry name" value="KOW"/>
    <property type="match status" value="1"/>
</dbReference>
<dbReference type="SUPFAM" id="SSF50104">
    <property type="entry name" value="Translation proteins SH3-like domain"/>
    <property type="match status" value="1"/>
</dbReference>
<dbReference type="PROSITE" id="PS01108">
    <property type="entry name" value="RIBOSOMAL_L24"/>
    <property type="match status" value="1"/>
</dbReference>
<name>RL24_PSEPG</name>
<protein>
    <recommendedName>
        <fullName evidence="1">Large ribosomal subunit protein uL24</fullName>
    </recommendedName>
    <alternativeName>
        <fullName evidence="2">50S ribosomal protein L24</fullName>
    </alternativeName>
</protein>
<proteinExistence type="inferred from homology"/>
<feature type="chain" id="PRO_1000086488" description="Large ribosomal subunit protein uL24">
    <location>
        <begin position="1"/>
        <end position="104"/>
    </location>
</feature>
<gene>
    <name evidence="1" type="primary">rplX</name>
    <name type="ordered locus">PputGB1_0495</name>
</gene>
<comment type="function">
    <text evidence="1">One of two assembly initiator proteins, it binds directly to the 5'-end of the 23S rRNA, where it nucleates assembly of the 50S subunit.</text>
</comment>
<comment type="function">
    <text evidence="1">One of the proteins that surrounds the polypeptide exit tunnel on the outside of the subunit.</text>
</comment>
<comment type="subunit">
    <text evidence="1">Part of the 50S ribosomal subunit.</text>
</comment>
<comment type="similarity">
    <text evidence="1">Belongs to the universal ribosomal protein uL24 family.</text>
</comment>